<keyword id="KW-0238">DNA-binding</keyword>
<keyword id="KW-0255">Endonuclease</keyword>
<keyword id="KW-0378">Hydrolase</keyword>
<keyword id="KW-0460">Magnesium</keyword>
<keyword id="KW-0479">Metal-binding</keyword>
<keyword id="KW-0540">Nuclease</keyword>
<keyword id="KW-0630">Potassium</keyword>
<keyword id="KW-1185">Reference proteome</keyword>
<protein>
    <recommendedName>
        <fullName evidence="1">Flap endonuclease Xni</fullName>
        <shortName evidence="1">FEN</shortName>
        <ecNumber evidence="1">3.1.-.-</ecNumber>
    </recommendedName>
</protein>
<sequence length="251" mass="28166">MAVHLLIVDALNLIRRIHAVQGSPCVETCQHALDQLIMHSQPTHAVAVFDDENRSSGWRHQRLPDYKAGRPPMPEELHDEMPALRAAFEQRGVPCWSTSGNEADDLAATLAVKVTQAGHQATIVSTDKGYCQLLSPTLRIRDYFQKRWLDAPFIDKEFGVQPQQLPDYWGLAGISSSKVPGVAGIGPKSATQLLVEFQSLEGIYENLDAVAEKWRKKLETHKEMAFLCRDIARLQTDLHIDGNLQQLRLVR</sequence>
<comment type="function">
    <text evidence="1">Has flap endonuclease activity. During DNA replication, flap endonucleases cleave the 5'-overhanging flap structure that is generated by displacement synthesis when DNA polymerase encounters the 5'-end of a downstream Okazaki fragment.</text>
</comment>
<comment type="cofactor">
    <cofactor evidence="1">
        <name>Mg(2+)</name>
        <dbReference type="ChEBI" id="CHEBI:18420"/>
    </cofactor>
    <text evidence="1">Binds 2 Mg(2+) per subunit. Only one magnesium ion has a direct interaction with the protein, the other interactions are indirect.</text>
</comment>
<comment type="cofactor">
    <cofactor evidence="1">
        <name>K(+)</name>
        <dbReference type="ChEBI" id="CHEBI:29103"/>
    </cofactor>
    <text evidence="1">Binds 1 K(+) per subunit. The potassium ion strongly increases the affinity for DNA.</text>
</comment>
<comment type="similarity">
    <text evidence="1">Belongs to the Xni family.</text>
</comment>
<comment type="sequence caution" evidence="2">
    <conflict type="erroneous initiation">
        <sequence resource="EMBL-CDS" id="ABV20298"/>
    </conflict>
    <text>Extended N-terminus.</text>
</comment>
<gene>
    <name evidence="1" type="primary">xni</name>
    <name evidence="1" type="synonym">ygdG</name>
    <name type="ordered locus">EcE24377A_3103</name>
</gene>
<dbReference type="EC" id="3.1.-.-" evidence="1"/>
<dbReference type="EMBL" id="CP000800">
    <property type="protein sequence ID" value="ABV20298.1"/>
    <property type="status" value="ALT_INIT"/>
    <property type="molecule type" value="Genomic_DNA"/>
</dbReference>
<dbReference type="RefSeq" id="WP_000268232.1">
    <property type="nucleotide sequence ID" value="NC_009801.1"/>
</dbReference>
<dbReference type="SMR" id="A7ZQP2"/>
<dbReference type="GeneID" id="93779200"/>
<dbReference type="KEGG" id="ecw:EcE24377A_3103"/>
<dbReference type="HOGENOM" id="CLU_004675_1_2_6"/>
<dbReference type="Proteomes" id="UP000001122">
    <property type="component" value="Chromosome"/>
</dbReference>
<dbReference type="GO" id="GO:0008409">
    <property type="term" value="F:5'-3' exonuclease activity"/>
    <property type="evidence" value="ECO:0007669"/>
    <property type="project" value="InterPro"/>
</dbReference>
<dbReference type="GO" id="GO:0017108">
    <property type="term" value="F:5'-flap endonuclease activity"/>
    <property type="evidence" value="ECO:0007669"/>
    <property type="project" value="UniProtKB-UniRule"/>
</dbReference>
<dbReference type="GO" id="GO:0003677">
    <property type="term" value="F:DNA binding"/>
    <property type="evidence" value="ECO:0007669"/>
    <property type="project" value="UniProtKB-UniRule"/>
</dbReference>
<dbReference type="GO" id="GO:0000287">
    <property type="term" value="F:magnesium ion binding"/>
    <property type="evidence" value="ECO:0007669"/>
    <property type="project" value="UniProtKB-UniRule"/>
</dbReference>
<dbReference type="GO" id="GO:0030955">
    <property type="term" value="F:potassium ion binding"/>
    <property type="evidence" value="ECO:0007669"/>
    <property type="project" value="UniProtKB-UniRule"/>
</dbReference>
<dbReference type="GO" id="GO:0033567">
    <property type="term" value="P:DNA replication, Okazaki fragment processing"/>
    <property type="evidence" value="ECO:0007669"/>
    <property type="project" value="UniProtKB-UniRule"/>
</dbReference>
<dbReference type="CDD" id="cd09898">
    <property type="entry name" value="H3TH_53EXO"/>
    <property type="match status" value="1"/>
</dbReference>
<dbReference type="CDD" id="cd09859">
    <property type="entry name" value="PIN_53EXO"/>
    <property type="match status" value="1"/>
</dbReference>
<dbReference type="FunFam" id="1.10.150.20:FF:000003">
    <property type="entry name" value="DNA polymerase I"/>
    <property type="match status" value="1"/>
</dbReference>
<dbReference type="FunFam" id="3.40.50.1010:FF:000011">
    <property type="entry name" value="Flap endonuclease Xni"/>
    <property type="match status" value="1"/>
</dbReference>
<dbReference type="Gene3D" id="1.10.150.20">
    <property type="entry name" value="5' to 3' exonuclease, C-terminal subdomain"/>
    <property type="match status" value="1"/>
</dbReference>
<dbReference type="Gene3D" id="3.40.50.1010">
    <property type="entry name" value="5'-nuclease"/>
    <property type="match status" value="1"/>
</dbReference>
<dbReference type="HAMAP" id="MF_01192">
    <property type="entry name" value="Xni"/>
    <property type="match status" value="1"/>
</dbReference>
<dbReference type="InterPro" id="IPR020046">
    <property type="entry name" value="5-3_exonucl_a-hlix_arch_N"/>
</dbReference>
<dbReference type="InterPro" id="IPR002421">
    <property type="entry name" value="5-3_exonuclease"/>
</dbReference>
<dbReference type="InterPro" id="IPR036279">
    <property type="entry name" value="5-3_exonuclease_C_sf"/>
</dbReference>
<dbReference type="InterPro" id="IPR020045">
    <property type="entry name" value="DNA_polI_H3TH"/>
</dbReference>
<dbReference type="InterPro" id="IPR038969">
    <property type="entry name" value="FEN"/>
</dbReference>
<dbReference type="InterPro" id="IPR008918">
    <property type="entry name" value="HhH2"/>
</dbReference>
<dbReference type="InterPro" id="IPR029060">
    <property type="entry name" value="PIN-like_dom_sf"/>
</dbReference>
<dbReference type="InterPro" id="IPR022895">
    <property type="entry name" value="Xni"/>
</dbReference>
<dbReference type="NCBIfam" id="NF007017">
    <property type="entry name" value="PRK09482.1"/>
    <property type="match status" value="1"/>
</dbReference>
<dbReference type="PANTHER" id="PTHR42646:SF2">
    <property type="entry name" value="5'-3' EXONUCLEASE FAMILY PROTEIN"/>
    <property type="match status" value="1"/>
</dbReference>
<dbReference type="PANTHER" id="PTHR42646">
    <property type="entry name" value="FLAP ENDONUCLEASE XNI"/>
    <property type="match status" value="1"/>
</dbReference>
<dbReference type="Pfam" id="PF01367">
    <property type="entry name" value="5_3_exonuc"/>
    <property type="match status" value="1"/>
</dbReference>
<dbReference type="Pfam" id="PF02739">
    <property type="entry name" value="5_3_exonuc_N"/>
    <property type="match status" value="1"/>
</dbReference>
<dbReference type="SMART" id="SM00475">
    <property type="entry name" value="53EXOc"/>
    <property type="match status" value="1"/>
</dbReference>
<dbReference type="SMART" id="SM00279">
    <property type="entry name" value="HhH2"/>
    <property type="match status" value="1"/>
</dbReference>
<dbReference type="SUPFAM" id="SSF47807">
    <property type="entry name" value="5' to 3' exonuclease, C-terminal subdomain"/>
    <property type="match status" value="1"/>
</dbReference>
<dbReference type="SUPFAM" id="SSF88723">
    <property type="entry name" value="PIN domain-like"/>
    <property type="match status" value="1"/>
</dbReference>
<name>XNI_ECO24</name>
<accession>A7ZQP2</accession>
<proteinExistence type="inferred from homology"/>
<organism>
    <name type="scientific">Escherichia coli O139:H28 (strain E24377A / ETEC)</name>
    <dbReference type="NCBI Taxonomy" id="331111"/>
    <lineage>
        <taxon>Bacteria</taxon>
        <taxon>Pseudomonadati</taxon>
        <taxon>Pseudomonadota</taxon>
        <taxon>Gammaproteobacteria</taxon>
        <taxon>Enterobacterales</taxon>
        <taxon>Enterobacteriaceae</taxon>
        <taxon>Escherichia</taxon>
    </lineage>
</organism>
<reference key="1">
    <citation type="journal article" date="2008" name="J. Bacteriol.">
        <title>The pangenome structure of Escherichia coli: comparative genomic analysis of E. coli commensal and pathogenic isolates.</title>
        <authorList>
            <person name="Rasko D.A."/>
            <person name="Rosovitz M.J."/>
            <person name="Myers G.S.A."/>
            <person name="Mongodin E.F."/>
            <person name="Fricke W.F."/>
            <person name="Gajer P."/>
            <person name="Crabtree J."/>
            <person name="Sebaihia M."/>
            <person name="Thomson N.R."/>
            <person name="Chaudhuri R."/>
            <person name="Henderson I.R."/>
            <person name="Sperandio V."/>
            <person name="Ravel J."/>
        </authorList>
    </citation>
    <scope>NUCLEOTIDE SEQUENCE [LARGE SCALE GENOMIC DNA]</scope>
    <source>
        <strain>E24377A / ETEC</strain>
    </source>
</reference>
<feature type="chain" id="PRO_1000065878" description="Flap endonuclease Xni">
    <location>
        <begin position="1"/>
        <end position="251"/>
    </location>
</feature>
<feature type="domain" description="5'-3' exonuclease" evidence="1">
    <location>
        <begin position="160"/>
        <end position="249"/>
    </location>
</feature>
<feature type="region of interest" description="Interaction with DNA" evidence="1">
    <location>
        <begin position="184"/>
        <end position="189"/>
    </location>
</feature>
<feature type="binding site" evidence="1">
    <location>
        <position position="104"/>
    </location>
    <ligand>
        <name>Mg(2+)</name>
        <dbReference type="ChEBI" id="CHEBI:18420"/>
    </ligand>
</feature>
<feature type="binding site" evidence="1">
    <location>
        <position position="171"/>
    </location>
    <ligand>
        <name>K(+)</name>
        <dbReference type="ChEBI" id="CHEBI:29103"/>
    </ligand>
</feature>
<feature type="binding site" evidence="1">
    <location>
        <position position="172"/>
    </location>
    <ligand>
        <name>K(+)</name>
        <dbReference type="ChEBI" id="CHEBI:29103"/>
    </ligand>
</feature>
<feature type="binding site" evidence="1">
    <location>
        <position position="180"/>
    </location>
    <ligand>
        <name>K(+)</name>
        <dbReference type="ChEBI" id="CHEBI:29103"/>
    </ligand>
</feature>
<feature type="binding site" evidence="1">
    <location>
        <position position="182"/>
    </location>
    <ligand>
        <name>K(+)</name>
        <dbReference type="ChEBI" id="CHEBI:29103"/>
    </ligand>
</feature>
<feature type="binding site" evidence="1">
    <location>
        <position position="185"/>
    </location>
    <ligand>
        <name>K(+)</name>
        <dbReference type="ChEBI" id="CHEBI:29103"/>
    </ligand>
</feature>
<evidence type="ECO:0000255" key="1">
    <source>
        <dbReference type="HAMAP-Rule" id="MF_01192"/>
    </source>
</evidence>
<evidence type="ECO:0000305" key="2"/>